<name>RL5_COXB2</name>
<sequence>MVELQELYKKTITPALQKEFGFKSVMAVPRLEKITLNMGLGEAVADKKVIERAMDDMIKISGQKPLITYARKSEAGFKIRAGWPIGCKVTLRRDRMYEFLKRLISIAIPRIRDFRGLSPKSFDGRGNYSLGIREQIVFPEIQYDKVDAIRGMDITITTTARTDEEGRALLKAFGFPLKDESR</sequence>
<accession>B6J251</accession>
<organism>
    <name type="scientific">Coxiella burnetii (strain CbuG_Q212)</name>
    <name type="common">Coxiella burnetii (strain Q212)</name>
    <dbReference type="NCBI Taxonomy" id="434923"/>
    <lineage>
        <taxon>Bacteria</taxon>
        <taxon>Pseudomonadati</taxon>
        <taxon>Pseudomonadota</taxon>
        <taxon>Gammaproteobacteria</taxon>
        <taxon>Legionellales</taxon>
        <taxon>Coxiellaceae</taxon>
        <taxon>Coxiella</taxon>
    </lineage>
</organism>
<reference key="1">
    <citation type="journal article" date="2009" name="Infect. Immun.">
        <title>Comparative genomics reveal extensive transposon-mediated genomic plasticity and diversity among potential effector proteins within the genus Coxiella.</title>
        <authorList>
            <person name="Beare P.A."/>
            <person name="Unsworth N."/>
            <person name="Andoh M."/>
            <person name="Voth D.E."/>
            <person name="Omsland A."/>
            <person name="Gilk S.D."/>
            <person name="Williams K.P."/>
            <person name="Sobral B.W."/>
            <person name="Kupko J.J. III"/>
            <person name="Porcella S.F."/>
            <person name="Samuel J.E."/>
            <person name="Heinzen R.A."/>
        </authorList>
    </citation>
    <scope>NUCLEOTIDE SEQUENCE [LARGE SCALE GENOMIC DNA]</scope>
    <source>
        <strain>CbuG_Q212</strain>
    </source>
</reference>
<protein>
    <recommendedName>
        <fullName evidence="1">Large ribosomal subunit protein uL5</fullName>
    </recommendedName>
    <alternativeName>
        <fullName evidence="2">50S ribosomal protein L5</fullName>
    </alternativeName>
</protein>
<keyword id="KW-0687">Ribonucleoprotein</keyword>
<keyword id="KW-0689">Ribosomal protein</keyword>
<keyword id="KW-0694">RNA-binding</keyword>
<keyword id="KW-0699">rRNA-binding</keyword>
<keyword id="KW-0820">tRNA-binding</keyword>
<comment type="function">
    <text evidence="1">This is one of the proteins that bind and probably mediate the attachment of the 5S RNA into the large ribosomal subunit, where it forms part of the central protuberance. In the 70S ribosome it contacts protein S13 of the 30S subunit (bridge B1b), connecting the 2 subunits; this bridge is implicated in subunit movement. Contacts the P site tRNA; the 5S rRNA and some of its associated proteins might help stabilize positioning of ribosome-bound tRNAs.</text>
</comment>
<comment type="subunit">
    <text evidence="1">Part of the 50S ribosomal subunit; part of the 5S rRNA/L5/L18/L25 subcomplex. Contacts the 5S rRNA and the P site tRNA. Forms a bridge to the 30S subunit in the 70S ribosome.</text>
</comment>
<comment type="similarity">
    <text evidence="1">Belongs to the universal ribosomal protein uL5 family.</text>
</comment>
<dbReference type="EMBL" id="CP001019">
    <property type="protein sequence ID" value="ACJ19029.1"/>
    <property type="molecule type" value="Genomic_DNA"/>
</dbReference>
<dbReference type="RefSeq" id="WP_010957461.1">
    <property type="nucleotide sequence ID" value="NC_011527.1"/>
</dbReference>
<dbReference type="SMR" id="B6J251"/>
<dbReference type="KEGG" id="cbg:CbuG_1755"/>
<dbReference type="HOGENOM" id="CLU_061015_2_1_6"/>
<dbReference type="GO" id="GO:1990904">
    <property type="term" value="C:ribonucleoprotein complex"/>
    <property type="evidence" value="ECO:0007669"/>
    <property type="project" value="UniProtKB-KW"/>
</dbReference>
<dbReference type="GO" id="GO:0005840">
    <property type="term" value="C:ribosome"/>
    <property type="evidence" value="ECO:0007669"/>
    <property type="project" value="UniProtKB-KW"/>
</dbReference>
<dbReference type="GO" id="GO:0019843">
    <property type="term" value="F:rRNA binding"/>
    <property type="evidence" value="ECO:0007669"/>
    <property type="project" value="UniProtKB-UniRule"/>
</dbReference>
<dbReference type="GO" id="GO:0003735">
    <property type="term" value="F:structural constituent of ribosome"/>
    <property type="evidence" value="ECO:0007669"/>
    <property type="project" value="InterPro"/>
</dbReference>
<dbReference type="GO" id="GO:0000049">
    <property type="term" value="F:tRNA binding"/>
    <property type="evidence" value="ECO:0007669"/>
    <property type="project" value="UniProtKB-UniRule"/>
</dbReference>
<dbReference type="GO" id="GO:0006412">
    <property type="term" value="P:translation"/>
    <property type="evidence" value="ECO:0007669"/>
    <property type="project" value="UniProtKB-UniRule"/>
</dbReference>
<dbReference type="FunFam" id="3.30.1440.10:FF:000001">
    <property type="entry name" value="50S ribosomal protein L5"/>
    <property type="match status" value="1"/>
</dbReference>
<dbReference type="Gene3D" id="3.30.1440.10">
    <property type="match status" value="1"/>
</dbReference>
<dbReference type="HAMAP" id="MF_01333_B">
    <property type="entry name" value="Ribosomal_uL5_B"/>
    <property type="match status" value="1"/>
</dbReference>
<dbReference type="InterPro" id="IPR002132">
    <property type="entry name" value="Ribosomal_uL5"/>
</dbReference>
<dbReference type="InterPro" id="IPR020930">
    <property type="entry name" value="Ribosomal_uL5_bac-type"/>
</dbReference>
<dbReference type="InterPro" id="IPR031309">
    <property type="entry name" value="Ribosomal_uL5_C"/>
</dbReference>
<dbReference type="InterPro" id="IPR020929">
    <property type="entry name" value="Ribosomal_uL5_CS"/>
</dbReference>
<dbReference type="InterPro" id="IPR022803">
    <property type="entry name" value="Ribosomal_uL5_dom_sf"/>
</dbReference>
<dbReference type="InterPro" id="IPR031310">
    <property type="entry name" value="Ribosomal_uL5_N"/>
</dbReference>
<dbReference type="NCBIfam" id="NF000585">
    <property type="entry name" value="PRK00010.1"/>
    <property type="match status" value="1"/>
</dbReference>
<dbReference type="PANTHER" id="PTHR11994">
    <property type="entry name" value="60S RIBOSOMAL PROTEIN L11-RELATED"/>
    <property type="match status" value="1"/>
</dbReference>
<dbReference type="Pfam" id="PF00281">
    <property type="entry name" value="Ribosomal_L5"/>
    <property type="match status" value="1"/>
</dbReference>
<dbReference type="Pfam" id="PF00673">
    <property type="entry name" value="Ribosomal_L5_C"/>
    <property type="match status" value="1"/>
</dbReference>
<dbReference type="PIRSF" id="PIRSF002161">
    <property type="entry name" value="Ribosomal_L5"/>
    <property type="match status" value="1"/>
</dbReference>
<dbReference type="SUPFAM" id="SSF55282">
    <property type="entry name" value="RL5-like"/>
    <property type="match status" value="1"/>
</dbReference>
<dbReference type="PROSITE" id="PS00358">
    <property type="entry name" value="RIBOSOMAL_L5"/>
    <property type="match status" value="1"/>
</dbReference>
<evidence type="ECO:0000255" key="1">
    <source>
        <dbReference type="HAMAP-Rule" id="MF_01333"/>
    </source>
</evidence>
<evidence type="ECO:0000305" key="2"/>
<gene>
    <name evidence="1" type="primary">rplE</name>
    <name type="ordered locus">CbuG_1755</name>
</gene>
<feature type="chain" id="PRO_1000142382" description="Large ribosomal subunit protein uL5">
    <location>
        <begin position="1"/>
        <end position="182"/>
    </location>
</feature>
<proteinExistence type="inferred from homology"/>